<organism>
    <name type="scientific">Helicobacter hepaticus (strain ATCC 51449 / 3B1)</name>
    <dbReference type="NCBI Taxonomy" id="235279"/>
    <lineage>
        <taxon>Bacteria</taxon>
        <taxon>Pseudomonadati</taxon>
        <taxon>Campylobacterota</taxon>
        <taxon>Epsilonproteobacteria</taxon>
        <taxon>Campylobacterales</taxon>
        <taxon>Helicobacteraceae</taxon>
        <taxon>Helicobacter</taxon>
    </lineage>
</organism>
<accession>Q7VK73</accession>
<reference key="1">
    <citation type="journal article" date="2003" name="Proc. Natl. Acad. Sci. U.S.A.">
        <title>The complete genome sequence of the carcinogenic bacterium Helicobacter hepaticus.</title>
        <authorList>
            <person name="Suerbaum S."/>
            <person name="Josenhans C."/>
            <person name="Sterzenbach T."/>
            <person name="Drescher B."/>
            <person name="Brandt P."/>
            <person name="Bell M."/>
            <person name="Droege M."/>
            <person name="Fartmann B."/>
            <person name="Fischer H.-P."/>
            <person name="Ge Z."/>
            <person name="Hoerster A."/>
            <person name="Holland R."/>
            <person name="Klein K."/>
            <person name="Koenig J."/>
            <person name="Macko L."/>
            <person name="Mendz G.L."/>
            <person name="Nyakatura G."/>
            <person name="Schauer D.B."/>
            <person name="Shen Z."/>
            <person name="Weber J."/>
            <person name="Frosch M."/>
            <person name="Fox J.G."/>
        </authorList>
    </citation>
    <scope>NUCLEOTIDE SEQUENCE [LARGE SCALE GENOMIC DNA]</scope>
    <source>
        <strain>ATCC 51449 / 3B1</strain>
    </source>
</reference>
<name>UVRC_HELHP</name>
<gene>
    <name evidence="1" type="primary">uvrC</name>
    <name type="ordered locus">HH_0019</name>
</gene>
<keyword id="KW-0963">Cytoplasm</keyword>
<keyword id="KW-0227">DNA damage</keyword>
<keyword id="KW-0228">DNA excision</keyword>
<keyword id="KW-0234">DNA repair</keyword>
<keyword id="KW-0267">Excision nuclease</keyword>
<keyword id="KW-1185">Reference proteome</keyword>
<keyword id="KW-0742">SOS response</keyword>
<proteinExistence type="inferred from homology"/>
<dbReference type="EMBL" id="AE017125">
    <property type="protein sequence ID" value="AAP76616.1"/>
    <property type="molecule type" value="Genomic_DNA"/>
</dbReference>
<dbReference type="RefSeq" id="WP_011114862.1">
    <property type="nucleotide sequence ID" value="NC_004917.1"/>
</dbReference>
<dbReference type="SMR" id="Q7VK73"/>
<dbReference type="STRING" id="235279.HH_0019"/>
<dbReference type="KEGG" id="hhe:HH_0019"/>
<dbReference type="eggNOG" id="COG0322">
    <property type="taxonomic scope" value="Bacteria"/>
</dbReference>
<dbReference type="HOGENOM" id="CLU_014841_3_2_7"/>
<dbReference type="OrthoDB" id="9804933at2"/>
<dbReference type="Proteomes" id="UP000002495">
    <property type="component" value="Chromosome"/>
</dbReference>
<dbReference type="GO" id="GO:0005737">
    <property type="term" value="C:cytoplasm"/>
    <property type="evidence" value="ECO:0007669"/>
    <property type="project" value="UniProtKB-SubCell"/>
</dbReference>
<dbReference type="GO" id="GO:0009380">
    <property type="term" value="C:excinuclease repair complex"/>
    <property type="evidence" value="ECO:0007669"/>
    <property type="project" value="InterPro"/>
</dbReference>
<dbReference type="GO" id="GO:0003677">
    <property type="term" value="F:DNA binding"/>
    <property type="evidence" value="ECO:0007669"/>
    <property type="project" value="UniProtKB-UniRule"/>
</dbReference>
<dbReference type="GO" id="GO:0009381">
    <property type="term" value="F:excinuclease ABC activity"/>
    <property type="evidence" value="ECO:0007669"/>
    <property type="project" value="UniProtKB-UniRule"/>
</dbReference>
<dbReference type="GO" id="GO:0006289">
    <property type="term" value="P:nucleotide-excision repair"/>
    <property type="evidence" value="ECO:0007669"/>
    <property type="project" value="UniProtKB-UniRule"/>
</dbReference>
<dbReference type="GO" id="GO:0009432">
    <property type="term" value="P:SOS response"/>
    <property type="evidence" value="ECO:0007669"/>
    <property type="project" value="UniProtKB-UniRule"/>
</dbReference>
<dbReference type="CDD" id="cd10434">
    <property type="entry name" value="GIY-YIG_UvrC_Cho"/>
    <property type="match status" value="1"/>
</dbReference>
<dbReference type="FunFam" id="3.40.1440.10:FF:000001">
    <property type="entry name" value="UvrABC system protein C"/>
    <property type="match status" value="1"/>
</dbReference>
<dbReference type="Gene3D" id="3.40.1440.10">
    <property type="entry name" value="GIY-YIG endonuclease"/>
    <property type="match status" value="1"/>
</dbReference>
<dbReference type="Gene3D" id="4.10.860.10">
    <property type="entry name" value="UVR domain"/>
    <property type="match status" value="1"/>
</dbReference>
<dbReference type="Gene3D" id="3.30.420.340">
    <property type="entry name" value="UvrC, RNAse H endonuclease domain"/>
    <property type="match status" value="1"/>
</dbReference>
<dbReference type="HAMAP" id="MF_00203">
    <property type="entry name" value="UvrC"/>
    <property type="match status" value="1"/>
</dbReference>
<dbReference type="InterPro" id="IPR000305">
    <property type="entry name" value="GIY-YIG_endonuc"/>
</dbReference>
<dbReference type="InterPro" id="IPR035901">
    <property type="entry name" value="GIY-YIG_endonuc_sf"/>
</dbReference>
<dbReference type="InterPro" id="IPR047296">
    <property type="entry name" value="GIY-YIG_UvrC_Cho"/>
</dbReference>
<dbReference type="InterPro" id="IPR010994">
    <property type="entry name" value="RuvA_2-like"/>
</dbReference>
<dbReference type="InterPro" id="IPR001943">
    <property type="entry name" value="UVR_dom"/>
</dbReference>
<dbReference type="InterPro" id="IPR036876">
    <property type="entry name" value="UVR_dom_sf"/>
</dbReference>
<dbReference type="InterPro" id="IPR050066">
    <property type="entry name" value="UvrABC_protein_C"/>
</dbReference>
<dbReference type="InterPro" id="IPR004791">
    <property type="entry name" value="UvrC"/>
</dbReference>
<dbReference type="InterPro" id="IPR001162">
    <property type="entry name" value="UvrC_RNase_H_dom"/>
</dbReference>
<dbReference type="InterPro" id="IPR038476">
    <property type="entry name" value="UvrC_RNase_H_dom_sf"/>
</dbReference>
<dbReference type="NCBIfam" id="TIGR00194">
    <property type="entry name" value="uvrC"/>
    <property type="match status" value="1"/>
</dbReference>
<dbReference type="PANTHER" id="PTHR30562:SF1">
    <property type="entry name" value="UVRABC SYSTEM PROTEIN C"/>
    <property type="match status" value="1"/>
</dbReference>
<dbReference type="PANTHER" id="PTHR30562">
    <property type="entry name" value="UVRC/OXIDOREDUCTASE"/>
    <property type="match status" value="1"/>
</dbReference>
<dbReference type="Pfam" id="PF01541">
    <property type="entry name" value="GIY-YIG"/>
    <property type="match status" value="1"/>
</dbReference>
<dbReference type="Pfam" id="PF02151">
    <property type="entry name" value="UVR"/>
    <property type="match status" value="1"/>
</dbReference>
<dbReference type="Pfam" id="PF22920">
    <property type="entry name" value="UvrC_RNaseH"/>
    <property type="match status" value="1"/>
</dbReference>
<dbReference type="Pfam" id="PF08459">
    <property type="entry name" value="UvrC_RNaseH_dom"/>
    <property type="match status" value="1"/>
</dbReference>
<dbReference type="SMART" id="SM00465">
    <property type="entry name" value="GIYc"/>
    <property type="match status" value="1"/>
</dbReference>
<dbReference type="SUPFAM" id="SSF46600">
    <property type="entry name" value="C-terminal UvrC-binding domain of UvrB"/>
    <property type="match status" value="1"/>
</dbReference>
<dbReference type="SUPFAM" id="SSF82771">
    <property type="entry name" value="GIY-YIG endonuclease"/>
    <property type="match status" value="1"/>
</dbReference>
<dbReference type="SUPFAM" id="SSF47781">
    <property type="entry name" value="RuvA domain 2-like"/>
    <property type="match status" value="1"/>
</dbReference>
<dbReference type="PROSITE" id="PS50164">
    <property type="entry name" value="GIY_YIG"/>
    <property type="match status" value="1"/>
</dbReference>
<dbReference type="PROSITE" id="PS50151">
    <property type="entry name" value="UVR"/>
    <property type="match status" value="1"/>
</dbReference>
<dbReference type="PROSITE" id="PS50165">
    <property type="entry name" value="UVRC"/>
    <property type="match status" value="1"/>
</dbReference>
<feature type="chain" id="PRO_0000227436" description="UvrABC system protein C">
    <location>
        <begin position="1"/>
        <end position="621"/>
    </location>
</feature>
<feature type="domain" description="GIY-YIG" evidence="1">
    <location>
        <begin position="20"/>
        <end position="106"/>
    </location>
</feature>
<feature type="domain" description="UVR" evidence="1">
    <location>
        <begin position="212"/>
        <end position="247"/>
    </location>
</feature>
<protein>
    <recommendedName>
        <fullName evidence="1">UvrABC system protein C</fullName>
        <shortName evidence="1">Protein UvrC</shortName>
    </recommendedName>
    <alternativeName>
        <fullName evidence="1">Excinuclease ABC subunit C</fullName>
    </alternativeName>
</protein>
<comment type="function">
    <text evidence="1">The UvrABC repair system catalyzes the recognition and processing of DNA lesions. UvrC both incises the 5' and 3' sides of the lesion. The N-terminal half is responsible for the 3' incision and the C-terminal half is responsible for the 5' incision.</text>
</comment>
<comment type="subunit">
    <text evidence="1">Interacts with UvrB in an incision complex.</text>
</comment>
<comment type="subcellular location">
    <subcellularLocation>
        <location evidence="1">Cytoplasm</location>
    </subcellularLocation>
</comment>
<comment type="similarity">
    <text evidence="1">Belongs to the UvrC family.</text>
</comment>
<evidence type="ECO:0000255" key="1">
    <source>
        <dbReference type="HAMAP-Rule" id="MF_00203"/>
    </source>
</evidence>
<sequence length="621" mass="71813">MSNKESTSYNLLVHLADLPTQSGIYQFFDNEDTLLYVGKAKNLKNRIKSYLSIENKHIVPKNNLSPRIALMVSQITRIHTLLTNNEQDALILENSLIKSLKPKYNILLRDDKTYPYIYIDKSLPYPRFELTRQVLKSNQIQYFGPFVSGARELLDSLYDNLPLVQKKSCVKGKKACIFHQIHKCPAPCENKVSIQTYAQTIAQGIALIEDKKALLKILESKMHTLSHNLQFEEAAIMRDRIQKITQMKNQSIIDMMSGDYDVFVLQEQDCGKNSQDSHKKSHTALHTHILMMLFIRNGRIISSDFILLHDDIQSHNLPQLYTQALLNHYKTQIPLLPQEILIPPFDFPDLLHLQQLLREQTRSSLKIVQPQRGAKKDLLQLAHKNALEIRRLHTQQNNTFSTLVSIKELCVLSQIPYSIEVFDTSHHSGTHNVGGMIVYENDDFIRSKYRRYELHTSDEYSQMHEMLLRRAQSFDSNPPPALWLLDGGRAQINLALDILKSVGANVEVLAIAKMKHNAKAYRAKGNAFDILRSKNAEFKLKPNDKRLQFLQKLRDEVHRYAITYHRYKKQKDIQKAQMMGKNYTQAQIKKLLDYFGSFESLKTASQEQINSVLSRRNRSDT</sequence>